<comment type="function">
    <text evidence="1">Involved in mRNA degradation. Catalyzes the phosphorolysis of single-stranded polyribonucleotides processively in the 3'- to 5'-direction.</text>
</comment>
<comment type="catalytic activity">
    <reaction evidence="1">
        <text>RNA(n+1) + phosphate = RNA(n) + a ribonucleoside 5'-diphosphate</text>
        <dbReference type="Rhea" id="RHEA:22096"/>
        <dbReference type="Rhea" id="RHEA-COMP:14527"/>
        <dbReference type="Rhea" id="RHEA-COMP:17342"/>
        <dbReference type="ChEBI" id="CHEBI:43474"/>
        <dbReference type="ChEBI" id="CHEBI:57930"/>
        <dbReference type="ChEBI" id="CHEBI:140395"/>
        <dbReference type="EC" id="2.7.7.8"/>
    </reaction>
</comment>
<comment type="cofactor">
    <cofactor evidence="1">
        <name>Mg(2+)</name>
        <dbReference type="ChEBI" id="CHEBI:18420"/>
    </cofactor>
</comment>
<comment type="subunit">
    <text evidence="1">Component of the RNA degradosome, which is a multiprotein complex involved in RNA processing and mRNA degradation.</text>
</comment>
<comment type="subcellular location">
    <subcellularLocation>
        <location evidence="1">Cytoplasm</location>
    </subcellularLocation>
</comment>
<comment type="similarity">
    <text evidence="1">Belongs to the polyribonucleotide nucleotidyltransferase family.</text>
</comment>
<organism>
    <name type="scientific">Francisella tularensis subsp. tularensis (strain FSC 198)</name>
    <dbReference type="NCBI Taxonomy" id="393115"/>
    <lineage>
        <taxon>Bacteria</taxon>
        <taxon>Pseudomonadati</taxon>
        <taxon>Pseudomonadota</taxon>
        <taxon>Gammaproteobacteria</taxon>
        <taxon>Thiotrichales</taxon>
        <taxon>Francisellaceae</taxon>
        <taxon>Francisella</taxon>
    </lineage>
</organism>
<keyword id="KW-0963">Cytoplasm</keyword>
<keyword id="KW-0460">Magnesium</keyword>
<keyword id="KW-0479">Metal-binding</keyword>
<keyword id="KW-0548">Nucleotidyltransferase</keyword>
<keyword id="KW-0694">RNA-binding</keyword>
<keyword id="KW-0808">Transferase</keyword>
<reference key="1">
    <citation type="journal article" date="2007" name="PLoS ONE">
        <title>Genome sequencing shows that European isolates of Francisella tularensis subspecies tularensis are almost identical to US laboratory strain Schu S4.</title>
        <authorList>
            <person name="Chaudhuri R.R."/>
            <person name="Ren C.-P."/>
            <person name="Desmond L."/>
            <person name="Vincent G.A."/>
            <person name="Silman N.J."/>
            <person name="Brehm J.K."/>
            <person name="Elmore M.J."/>
            <person name="Hudson M.J."/>
            <person name="Forsman M."/>
            <person name="Isherwood K.E."/>
            <person name="Gurycova D."/>
            <person name="Minton N.P."/>
            <person name="Titball R.W."/>
            <person name="Pallen M.J."/>
            <person name="Vipond R."/>
        </authorList>
    </citation>
    <scope>NUCLEOTIDE SEQUENCE [LARGE SCALE GENOMIC DNA]</scope>
    <source>
        <strain>FSC 198</strain>
    </source>
</reference>
<feature type="chain" id="PRO_0000329654" description="Polyribonucleotide nucleotidyltransferase">
    <location>
        <begin position="1"/>
        <end position="693"/>
    </location>
</feature>
<feature type="domain" description="KH" evidence="1">
    <location>
        <begin position="556"/>
        <end position="615"/>
    </location>
</feature>
<feature type="domain" description="S1 motif" evidence="1">
    <location>
        <begin position="625"/>
        <end position="693"/>
    </location>
</feature>
<feature type="binding site" evidence="1">
    <location>
        <position position="489"/>
    </location>
    <ligand>
        <name>Mg(2+)</name>
        <dbReference type="ChEBI" id="CHEBI:18420"/>
    </ligand>
</feature>
<feature type="binding site" evidence="1">
    <location>
        <position position="495"/>
    </location>
    <ligand>
        <name>Mg(2+)</name>
        <dbReference type="ChEBI" id="CHEBI:18420"/>
    </ligand>
</feature>
<gene>
    <name evidence="1" type="primary">pnp</name>
    <name type="ordered locus">FTF0699</name>
</gene>
<dbReference type="EC" id="2.7.7.8" evidence="1"/>
<dbReference type="EMBL" id="AM286280">
    <property type="protein sequence ID" value="CAL08715.1"/>
    <property type="molecule type" value="Genomic_DNA"/>
</dbReference>
<dbReference type="RefSeq" id="WP_003020501.1">
    <property type="nucleotide sequence ID" value="NC_008245.1"/>
</dbReference>
<dbReference type="SMR" id="Q14IC9"/>
<dbReference type="KEGG" id="ftf:FTF0699"/>
<dbReference type="HOGENOM" id="CLU_004217_2_2_6"/>
<dbReference type="GO" id="GO:0005829">
    <property type="term" value="C:cytosol"/>
    <property type="evidence" value="ECO:0007669"/>
    <property type="project" value="TreeGrafter"/>
</dbReference>
<dbReference type="GO" id="GO:0000175">
    <property type="term" value="F:3'-5'-RNA exonuclease activity"/>
    <property type="evidence" value="ECO:0007669"/>
    <property type="project" value="TreeGrafter"/>
</dbReference>
<dbReference type="GO" id="GO:0000287">
    <property type="term" value="F:magnesium ion binding"/>
    <property type="evidence" value="ECO:0007669"/>
    <property type="project" value="UniProtKB-UniRule"/>
</dbReference>
<dbReference type="GO" id="GO:0004654">
    <property type="term" value="F:polyribonucleotide nucleotidyltransferase activity"/>
    <property type="evidence" value="ECO:0007669"/>
    <property type="project" value="UniProtKB-UniRule"/>
</dbReference>
<dbReference type="GO" id="GO:0003723">
    <property type="term" value="F:RNA binding"/>
    <property type="evidence" value="ECO:0007669"/>
    <property type="project" value="UniProtKB-UniRule"/>
</dbReference>
<dbReference type="GO" id="GO:0006402">
    <property type="term" value="P:mRNA catabolic process"/>
    <property type="evidence" value="ECO:0007669"/>
    <property type="project" value="UniProtKB-UniRule"/>
</dbReference>
<dbReference type="GO" id="GO:0006396">
    <property type="term" value="P:RNA processing"/>
    <property type="evidence" value="ECO:0007669"/>
    <property type="project" value="InterPro"/>
</dbReference>
<dbReference type="CDD" id="cd02393">
    <property type="entry name" value="KH-I_PNPase"/>
    <property type="match status" value="1"/>
</dbReference>
<dbReference type="CDD" id="cd11364">
    <property type="entry name" value="RNase_PH_PNPase_2"/>
    <property type="match status" value="1"/>
</dbReference>
<dbReference type="FunFam" id="3.30.1370.10:FF:000001">
    <property type="entry name" value="Polyribonucleotide nucleotidyltransferase"/>
    <property type="match status" value="1"/>
</dbReference>
<dbReference type="FunFam" id="3.30.230.70:FF:000001">
    <property type="entry name" value="Polyribonucleotide nucleotidyltransferase"/>
    <property type="match status" value="1"/>
</dbReference>
<dbReference type="FunFam" id="3.30.230.70:FF:000002">
    <property type="entry name" value="Polyribonucleotide nucleotidyltransferase"/>
    <property type="match status" value="1"/>
</dbReference>
<dbReference type="Gene3D" id="3.30.230.70">
    <property type="entry name" value="GHMP Kinase, N-terminal domain"/>
    <property type="match status" value="2"/>
</dbReference>
<dbReference type="Gene3D" id="3.30.1370.10">
    <property type="entry name" value="K Homology domain, type 1"/>
    <property type="match status" value="1"/>
</dbReference>
<dbReference type="Gene3D" id="2.40.50.140">
    <property type="entry name" value="Nucleic acid-binding proteins"/>
    <property type="match status" value="1"/>
</dbReference>
<dbReference type="HAMAP" id="MF_01595">
    <property type="entry name" value="PNPase"/>
    <property type="match status" value="1"/>
</dbReference>
<dbReference type="InterPro" id="IPR001247">
    <property type="entry name" value="ExoRNase_PH_dom1"/>
</dbReference>
<dbReference type="InterPro" id="IPR015847">
    <property type="entry name" value="ExoRNase_PH_dom2"/>
</dbReference>
<dbReference type="InterPro" id="IPR036345">
    <property type="entry name" value="ExoRNase_PH_dom2_sf"/>
</dbReference>
<dbReference type="InterPro" id="IPR004087">
    <property type="entry name" value="KH_dom"/>
</dbReference>
<dbReference type="InterPro" id="IPR004088">
    <property type="entry name" value="KH_dom_type_1"/>
</dbReference>
<dbReference type="InterPro" id="IPR036612">
    <property type="entry name" value="KH_dom_type_1_sf"/>
</dbReference>
<dbReference type="InterPro" id="IPR012340">
    <property type="entry name" value="NA-bd_OB-fold"/>
</dbReference>
<dbReference type="InterPro" id="IPR012162">
    <property type="entry name" value="PNPase"/>
</dbReference>
<dbReference type="InterPro" id="IPR027408">
    <property type="entry name" value="PNPase/RNase_PH_dom_sf"/>
</dbReference>
<dbReference type="InterPro" id="IPR015848">
    <property type="entry name" value="PNPase_PH_RNA-bd_bac/org-type"/>
</dbReference>
<dbReference type="InterPro" id="IPR036456">
    <property type="entry name" value="PNPase_PH_RNA-bd_sf"/>
</dbReference>
<dbReference type="InterPro" id="IPR020568">
    <property type="entry name" value="Ribosomal_Su5_D2-typ_SF"/>
</dbReference>
<dbReference type="InterPro" id="IPR003029">
    <property type="entry name" value="S1_domain"/>
</dbReference>
<dbReference type="NCBIfam" id="TIGR03591">
    <property type="entry name" value="polynuc_phos"/>
    <property type="match status" value="1"/>
</dbReference>
<dbReference type="NCBIfam" id="NF008805">
    <property type="entry name" value="PRK11824.1"/>
    <property type="match status" value="1"/>
</dbReference>
<dbReference type="PANTHER" id="PTHR11252">
    <property type="entry name" value="POLYRIBONUCLEOTIDE NUCLEOTIDYLTRANSFERASE"/>
    <property type="match status" value="1"/>
</dbReference>
<dbReference type="PANTHER" id="PTHR11252:SF0">
    <property type="entry name" value="POLYRIBONUCLEOTIDE NUCLEOTIDYLTRANSFERASE 1, MITOCHONDRIAL"/>
    <property type="match status" value="1"/>
</dbReference>
<dbReference type="Pfam" id="PF00013">
    <property type="entry name" value="KH_1"/>
    <property type="match status" value="1"/>
</dbReference>
<dbReference type="Pfam" id="PF03726">
    <property type="entry name" value="PNPase"/>
    <property type="match status" value="1"/>
</dbReference>
<dbReference type="Pfam" id="PF01138">
    <property type="entry name" value="RNase_PH"/>
    <property type="match status" value="2"/>
</dbReference>
<dbReference type="Pfam" id="PF03725">
    <property type="entry name" value="RNase_PH_C"/>
    <property type="match status" value="2"/>
</dbReference>
<dbReference type="Pfam" id="PF00575">
    <property type="entry name" value="S1"/>
    <property type="match status" value="1"/>
</dbReference>
<dbReference type="PIRSF" id="PIRSF005499">
    <property type="entry name" value="PNPase"/>
    <property type="match status" value="1"/>
</dbReference>
<dbReference type="SMART" id="SM00322">
    <property type="entry name" value="KH"/>
    <property type="match status" value="1"/>
</dbReference>
<dbReference type="SMART" id="SM00316">
    <property type="entry name" value="S1"/>
    <property type="match status" value="1"/>
</dbReference>
<dbReference type="SUPFAM" id="SSF54791">
    <property type="entry name" value="Eukaryotic type KH-domain (KH-domain type I)"/>
    <property type="match status" value="1"/>
</dbReference>
<dbReference type="SUPFAM" id="SSF50249">
    <property type="entry name" value="Nucleic acid-binding proteins"/>
    <property type="match status" value="1"/>
</dbReference>
<dbReference type="SUPFAM" id="SSF46915">
    <property type="entry name" value="Polynucleotide phosphorylase/guanosine pentaphosphate synthase (PNPase/GPSI), domain 3"/>
    <property type="match status" value="1"/>
</dbReference>
<dbReference type="SUPFAM" id="SSF55666">
    <property type="entry name" value="Ribonuclease PH domain 2-like"/>
    <property type="match status" value="2"/>
</dbReference>
<dbReference type="SUPFAM" id="SSF54211">
    <property type="entry name" value="Ribosomal protein S5 domain 2-like"/>
    <property type="match status" value="2"/>
</dbReference>
<dbReference type="PROSITE" id="PS50084">
    <property type="entry name" value="KH_TYPE_1"/>
    <property type="match status" value="1"/>
</dbReference>
<dbReference type="PROSITE" id="PS50126">
    <property type="entry name" value="S1"/>
    <property type="match status" value="1"/>
</dbReference>
<sequence>MKIFREVFELGNKEIILETGGMARQADGSVTVSCGNNVVLVTTVVKKSVADGTDFFPLSVHYLEKTYAAGKIPGGFLRREGRPSEEQILISRLIDRSIRPSFPDGFFNEIQIVATVLSYDGAFSPDILALIGASASLAISGAPYDDVVAGVRVGYTNGKYILNPNKQDLRDSDLDLVVSGTDDAILMVESEANSLPESVMLGGILYAHKHLKTIINSINRLAKVASKPRIEYSIYQINKFLKSQIKSQFFGEIKNAYTIASKQERNLKLNAIRKNVLEYIFSSDVDGNEYTEKEILEAFHDIEKDLVRSNILEGKPRIDGRCTETIRPINVKIGVLPGVHGSALFTRGETQALVVTTLGSDRDAQLVESLDGIEKCRYMLHYNFPPYSVGECGMVGMAPKRREIGHANLAKRATQAVFPNEEAYPYVVRVVSEILESNGSSSMATVCGSSLSMMDAGVPIAEPVAGIAMGLIKDGAKYAVLSDILGDEDHLGDMDFKVAGTRYGVTALQMDIKIKGISREILEQALEQARAGRLHILGIMNEVIKEHKEAVSDVAPQIHVMNINPAKIKDVVGRGGATVKGIVEKTGAQIDTSDSGEVKVFAKDKKSMDMAVAMIEEIVAEVEEGQVYKGKIVKLLDSGVFVNLLGSQDGYLPFSEIEQAGMKTNSLVEGQGLEVLVQNIDRGGRVKLSLVAR</sequence>
<name>PNP_FRAT1</name>
<evidence type="ECO:0000255" key="1">
    <source>
        <dbReference type="HAMAP-Rule" id="MF_01595"/>
    </source>
</evidence>
<protein>
    <recommendedName>
        <fullName evidence="1">Polyribonucleotide nucleotidyltransferase</fullName>
        <ecNumber evidence="1">2.7.7.8</ecNumber>
    </recommendedName>
    <alternativeName>
        <fullName evidence="1">Polynucleotide phosphorylase</fullName>
        <shortName evidence="1">PNPase</shortName>
    </alternativeName>
</protein>
<accession>Q14IC9</accession>
<proteinExistence type="inferred from homology"/>